<proteinExistence type="inferred from homology"/>
<comment type="function">
    <text evidence="1">This is one of the proteins that binds to the 5S RNA in the ribosome where it forms part of the central protuberance.</text>
</comment>
<comment type="subunit">
    <text evidence="1">Part of the 50S ribosomal subunit; part of the 5S rRNA/L5/L18/L25 subcomplex. Contacts the 5S rRNA. Binds to the 5S rRNA independently of L5 and L18.</text>
</comment>
<comment type="similarity">
    <text evidence="1">Belongs to the bacterial ribosomal protein bL25 family. CTC subfamily.</text>
</comment>
<organism>
    <name type="scientific">Acidiphilium cryptum (strain JF-5)</name>
    <dbReference type="NCBI Taxonomy" id="349163"/>
    <lineage>
        <taxon>Bacteria</taxon>
        <taxon>Pseudomonadati</taxon>
        <taxon>Pseudomonadota</taxon>
        <taxon>Alphaproteobacteria</taxon>
        <taxon>Acetobacterales</taxon>
        <taxon>Acidocellaceae</taxon>
        <taxon>Acidiphilium</taxon>
    </lineage>
</organism>
<evidence type="ECO:0000255" key="1">
    <source>
        <dbReference type="HAMAP-Rule" id="MF_01334"/>
    </source>
</evidence>
<evidence type="ECO:0000256" key="2">
    <source>
        <dbReference type="SAM" id="MobiDB-lite"/>
    </source>
</evidence>
<evidence type="ECO:0000305" key="3"/>
<name>RL25_ACICJ</name>
<protein>
    <recommendedName>
        <fullName evidence="1">Large ribosomal subunit protein bL25</fullName>
    </recommendedName>
    <alternativeName>
        <fullName evidence="3">50S ribosomal protein L25</fullName>
    </alternativeName>
    <alternativeName>
        <fullName evidence="1">General stress protein CTC</fullName>
    </alternativeName>
</protein>
<feature type="chain" id="PRO_1000052861" description="Large ribosomal subunit protein bL25">
    <location>
        <begin position="1"/>
        <end position="217"/>
    </location>
</feature>
<feature type="region of interest" description="Disordered" evidence="2">
    <location>
        <begin position="195"/>
        <end position="217"/>
    </location>
</feature>
<feature type="compositionally biased region" description="Low complexity" evidence="2">
    <location>
        <begin position="195"/>
        <end position="211"/>
    </location>
</feature>
<reference key="1">
    <citation type="submission" date="2007-05" db="EMBL/GenBank/DDBJ databases">
        <title>Complete sequence of chromosome of Acidiphilium cryptum JF-5.</title>
        <authorList>
            <consortium name="US DOE Joint Genome Institute"/>
            <person name="Copeland A."/>
            <person name="Lucas S."/>
            <person name="Lapidus A."/>
            <person name="Barry K."/>
            <person name="Detter J.C."/>
            <person name="Glavina del Rio T."/>
            <person name="Hammon N."/>
            <person name="Israni S."/>
            <person name="Dalin E."/>
            <person name="Tice H."/>
            <person name="Pitluck S."/>
            <person name="Sims D."/>
            <person name="Brettin T."/>
            <person name="Bruce D."/>
            <person name="Han C."/>
            <person name="Schmutz J."/>
            <person name="Larimer F."/>
            <person name="Land M."/>
            <person name="Hauser L."/>
            <person name="Kyrpides N."/>
            <person name="Kim E."/>
            <person name="Magnuson T."/>
            <person name="Richardson P."/>
        </authorList>
    </citation>
    <scope>NUCLEOTIDE SEQUENCE [LARGE SCALE GENOMIC DNA]</scope>
    <source>
        <strain>JF-5</strain>
    </source>
</reference>
<dbReference type="EMBL" id="CP000697">
    <property type="protein sequence ID" value="ABQ30879.1"/>
    <property type="molecule type" value="Genomic_DNA"/>
</dbReference>
<dbReference type="RefSeq" id="WP_007421907.1">
    <property type="nucleotide sequence ID" value="NC_009484.1"/>
</dbReference>
<dbReference type="SMR" id="A5FZ47"/>
<dbReference type="STRING" id="349163.Acry_1674"/>
<dbReference type="KEGG" id="acr:Acry_1674"/>
<dbReference type="eggNOG" id="COG1825">
    <property type="taxonomic scope" value="Bacteria"/>
</dbReference>
<dbReference type="HOGENOM" id="CLU_075939_0_0_5"/>
<dbReference type="Proteomes" id="UP000000245">
    <property type="component" value="Chromosome"/>
</dbReference>
<dbReference type="GO" id="GO:0022625">
    <property type="term" value="C:cytosolic large ribosomal subunit"/>
    <property type="evidence" value="ECO:0007669"/>
    <property type="project" value="TreeGrafter"/>
</dbReference>
<dbReference type="GO" id="GO:0008097">
    <property type="term" value="F:5S rRNA binding"/>
    <property type="evidence" value="ECO:0007669"/>
    <property type="project" value="InterPro"/>
</dbReference>
<dbReference type="GO" id="GO:0003735">
    <property type="term" value="F:structural constituent of ribosome"/>
    <property type="evidence" value="ECO:0007669"/>
    <property type="project" value="InterPro"/>
</dbReference>
<dbReference type="GO" id="GO:0006412">
    <property type="term" value="P:translation"/>
    <property type="evidence" value="ECO:0007669"/>
    <property type="project" value="UniProtKB-UniRule"/>
</dbReference>
<dbReference type="CDD" id="cd00495">
    <property type="entry name" value="Ribosomal_L25_TL5_CTC"/>
    <property type="match status" value="1"/>
</dbReference>
<dbReference type="Gene3D" id="2.170.120.20">
    <property type="entry name" value="Ribosomal protein L25, beta domain"/>
    <property type="match status" value="1"/>
</dbReference>
<dbReference type="Gene3D" id="2.40.240.10">
    <property type="entry name" value="Ribosomal Protein L25, Chain P"/>
    <property type="match status" value="1"/>
</dbReference>
<dbReference type="HAMAP" id="MF_01334">
    <property type="entry name" value="Ribosomal_bL25_CTC"/>
    <property type="match status" value="1"/>
</dbReference>
<dbReference type="InterPro" id="IPR020056">
    <property type="entry name" value="Rbsml_bL25/Gln-tRNA_synth_N"/>
</dbReference>
<dbReference type="InterPro" id="IPR011035">
    <property type="entry name" value="Ribosomal_bL25/Gln-tRNA_synth"/>
</dbReference>
<dbReference type="InterPro" id="IPR020057">
    <property type="entry name" value="Ribosomal_bL25_b-dom"/>
</dbReference>
<dbReference type="InterPro" id="IPR037121">
    <property type="entry name" value="Ribosomal_bL25_C"/>
</dbReference>
<dbReference type="InterPro" id="IPR001021">
    <property type="entry name" value="Ribosomal_bL25_long"/>
</dbReference>
<dbReference type="InterPro" id="IPR029751">
    <property type="entry name" value="Ribosomal_L25_dom"/>
</dbReference>
<dbReference type="InterPro" id="IPR020930">
    <property type="entry name" value="Ribosomal_uL5_bac-type"/>
</dbReference>
<dbReference type="NCBIfam" id="TIGR00731">
    <property type="entry name" value="bL25_bact_ctc"/>
    <property type="match status" value="1"/>
</dbReference>
<dbReference type="NCBIfam" id="NF004128">
    <property type="entry name" value="PRK05618.1-2"/>
    <property type="match status" value="1"/>
</dbReference>
<dbReference type="PANTHER" id="PTHR33284">
    <property type="entry name" value="RIBOSOMAL PROTEIN L25/GLN-TRNA SYNTHETASE, ANTI-CODON-BINDING DOMAIN-CONTAINING PROTEIN"/>
    <property type="match status" value="1"/>
</dbReference>
<dbReference type="PANTHER" id="PTHR33284:SF1">
    <property type="entry name" value="RIBOSOMAL PROTEIN L25_GLN-TRNA SYNTHETASE, ANTI-CODON-BINDING DOMAIN-CONTAINING PROTEIN"/>
    <property type="match status" value="1"/>
</dbReference>
<dbReference type="Pfam" id="PF01386">
    <property type="entry name" value="Ribosomal_L25p"/>
    <property type="match status" value="1"/>
</dbReference>
<dbReference type="Pfam" id="PF14693">
    <property type="entry name" value="Ribosomal_TL5_C"/>
    <property type="match status" value="1"/>
</dbReference>
<dbReference type="SUPFAM" id="SSF50715">
    <property type="entry name" value="Ribosomal protein L25-like"/>
    <property type="match status" value="1"/>
</dbReference>
<sequence>MAKFETIAAEDRARAGKGVARATRRAGKVPAVIYGAKQEPTLIALDPRIVLREMKRGGWRSRLYEIETASGKARALMRDIQLHPVTDQPEHVDFQRLAAGEPVRVAVNVNFLNELISVGMKRGGVLNVVRHAVEVLCDPDHIPDHFEADLGPLDINDNIRWSDLKGTGEAKPTITDRDFVIATIAPPTVVAEAAPAEGAAAAPAKGAAKGAAKGGKK</sequence>
<keyword id="KW-1185">Reference proteome</keyword>
<keyword id="KW-0687">Ribonucleoprotein</keyword>
<keyword id="KW-0689">Ribosomal protein</keyword>
<keyword id="KW-0694">RNA-binding</keyword>
<keyword id="KW-0699">rRNA-binding</keyword>
<accession>A5FZ47</accession>
<gene>
    <name evidence="1" type="primary">rplY</name>
    <name evidence="1" type="synonym">ctc</name>
    <name type="ordered locus">Acry_1674</name>
</gene>